<gene>
    <name evidence="1" type="primary">rplV</name>
    <name type="ordered locus">LL2094</name>
    <name type="ORF">L0418</name>
</gene>
<reference key="1">
    <citation type="journal article" date="2001" name="Genome Res.">
        <title>The complete genome sequence of the lactic acid bacterium Lactococcus lactis ssp. lactis IL1403.</title>
        <authorList>
            <person name="Bolotin A."/>
            <person name="Wincker P."/>
            <person name="Mauger S."/>
            <person name="Jaillon O."/>
            <person name="Malarme K."/>
            <person name="Weissenbach J."/>
            <person name="Ehrlich S.D."/>
            <person name="Sorokin A."/>
        </authorList>
    </citation>
    <scope>NUCLEOTIDE SEQUENCE [LARGE SCALE GENOMIC DNA]</scope>
    <source>
        <strain>IL1403</strain>
    </source>
</reference>
<sequence length="115" mass="12470">MAEITSAKATAKTVRVSPRKTRLVIDLIRGKRVADAIAILKFTPTKAAVEVENVLNSAIANAENNFGLEKANLVVSETFINEGPTMKRFRPRAKGSASPINKRTAHITVVVAEKE</sequence>
<accession>Q9CDW7</accession>
<name>RL22_LACLA</name>
<protein>
    <recommendedName>
        <fullName evidence="1">Large ribosomal subunit protein uL22</fullName>
    </recommendedName>
    <alternativeName>
        <fullName evidence="2">50S ribosomal protein L22</fullName>
    </alternativeName>
</protein>
<keyword id="KW-1185">Reference proteome</keyword>
<keyword id="KW-0687">Ribonucleoprotein</keyword>
<keyword id="KW-0689">Ribosomal protein</keyword>
<keyword id="KW-0694">RNA-binding</keyword>
<keyword id="KW-0699">rRNA-binding</keyword>
<comment type="function">
    <text evidence="1">This protein binds specifically to 23S rRNA; its binding is stimulated by other ribosomal proteins, e.g. L4, L17, and L20. It is important during the early stages of 50S assembly. It makes multiple contacts with different domains of the 23S rRNA in the assembled 50S subunit and ribosome (By similarity).</text>
</comment>
<comment type="function">
    <text evidence="1">The globular domain of the protein is located near the polypeptide exit tunnel on the outside of the subunit, while an extended beta-hairpin is found that lines the wall of the exit tunnel in the center of the 70S ribosome.</text>
</comment>
<comment type="subunit">
    <text evidence="1">Part of the 50S ribosomal subunit.</text>
</comment>
<comment type="similarity">
    <text evidence="1">Belongs to the universal ribosomal protein uL22 family.</text>
</comment>
<dbReference type="EMBL" id="AE005176">
    <property type="protein sequence ID" value="AAK06192.1"/>
    <property type="molecule type" value="Genomic_DNA"/>
</dbReference>
<dbReference type="PIR" id="F86886">
    <property type="entry name" value="F86886"/>
</dbReference>
<dbReference type="RefSeq" id="NP_268251.1">
    <property type="nucleotide sequence ID" value="NC_002662.1"/>
</dbReference>
<dbReference type="RefSeq" id="WP_010906302.1">
    <property type="nucleotide sequence ID" value="NC_002662.1"/>
</dbReference>
<dbReference type="SMR" id="Q9CDW7"/>
<dbReference type="PaxDb" id="272623-L0418"/>
<dbReference type="EnsemblBacteria" id="AAK06192">
    <property type="protein sequence ID" value="AAK06192"/>
    <property type="gene ID" value="L0418"/>
</dbReference>
<dbReference type="GeneID" id="89634441"/>
<dbReference type="KEGG" id="lla:L0418"/>
<dbReference type="PATRIC" id="fig|272623.7.peg.2253"/>
<dbReference type="eggNOG" id="COG0091">
    <property type="taxonomic scope" value="Bacteria"/>
</dbReference>
<dbReference type="HOGENOM" id="CLU_083987_3_3_9"/>
<dbReference type="OrthoDB" id="9805969at2"/>
<dbReference type="Proteomes" id="UP000002196">
    <property type="component" value="Chromosome"/>
</dbReference>
<dbReference type="GO" id="GO:0022625">
    <property type="term" value="C:cytosolic large ribosomal subunit"/>
    <property type="evidence" value="ECO:0007669"/>
    <property type="project" value="TreeGrafter"/>
</dbReference>
<dbReference type="GO" id="GO:0019843">
    <property type="term" value="F:rRNA binding"/>
    <property type="evidence" value="ECO:0007669"/>
    <property type="project" value="UniProtKB-UniRule"/>
</dbReference>
<dbReference type="GO" id="GO:0003735">
    <property type="term" value="F:structural constituent of ribosome"/>
    <property type="evidence" value="ECO:0007669"/>
    <property type="project" value="InterPro"/>
</dbReference>
<dbReference type="GO" id="GO:0006412">
    <property type="term" value="P:translation"/>
    <property type="evidence" value="ECO:0007669"/>
    <property type="project" value="UniProtKB-UniRule"/>
</dbReference>
<dbReference type="CDD" id="cd00336">
    <property type="entry name" value="Ribosomal_L22"/>
    <property type="match status" value="1"/>
</dbReference>
<dbReference type="FunFam" id="3.90.470.10:FF:000001">
    <property type="entry name" value="50S ribosomal protein L22"/>
    <property type="match status" value="1"/>
</dbReference>
<dbReference type="Gene3D" id="3.90.470.10">
    <property type="entry name" value="Ribosomal protein L22/L17"/>
    <property type="match status" value="1"/>
</dbReference>
<dbReference type="HAMAP" id="MF_01331_B">
    <property type="entry name" value="Ribosomal_uL22_B"/>
    <property type="match status" value="1"/>
</dbReference>
<dbReference type="InterPro" id="IPR001063">
    <property type="entry name" value="Ribosomal_uL22"/>
</dbReference>
<dbReference type="InterPro" id="IPR005727">
    <property type="entry name" value="Ribosomal_uL22_bac/chlpt-type"/>
</dbReference>
<dbReference type="InterPro" id="IPR047867">
    <property type="entry name" value="Ribosomal_uL22_bac/org-type"/>
</dbReference>
<dbReference type="InterPro" id="IPR018260">
    <property type="entry name" value="Ribosomal_uL22_CS"/>
</dbReference>
<dbReference type="InterPro" id="IPR036394">
    <property type="entry name" value="Ribosomal_uL22_sf"/>
</dbReference>
<dbReference type="NCBIfam" id="TIGR01044">
    <property type="entry name" value="rplV_bact"/>
    <property type="match status" value="1"/>
</dbReference>
<dbReference type="PANTHER" id="PTHR13501">
    <property type="entry name" value="CHLOROPLAST 50S RIBOSOMAL PROTEIN L22-RELATED"/>
    <property type="match status" value="1"/>
</dbReference>
<dbReference type="PANTHER" id="PTHR13501:SF8">
    <property type="entry name" value="LARGE RIBOSOMAL SUBUNIT PROTEIN UL22M"/>
    <property type="match status" value="1"/>
</dbReference>
<dbReference type="Pfam" id="PF00237">
    <property type="entry name" value="Ribosomal_L22"/>
    <property type="match status" value="1"/>
</dbReference>
<dbReference type="SUPFAM" id="SSF54843">
    <property type="entry name" value="Ribosomal protein L22"/>
    <property type="match status" value="1"/>
</dbReference>
<dbReference type="PROSITE" id="PS00464">
    <property type="entry name" value="RIBOSOMAL_L22"/>
    <property type="match status" value="1"/>
</dbReference>
<organism>
    <name type="scientific">Lactococcus lactis subsp. lactis (strain IL1403)</name>
    <name type="common">Streptococcus lactis</name>
    <dbReference type="NCBI Taxonomy" id="272623"/>
    <lineage>
        <taxon>Bacteria</taxon>
        <taxon>Bacillati</taxon>
        <taxon>Bacillota</taxon>
        <taxon>Bacilli</taxon>
        <taxon>Lactobacillales</taxon>
        <taxon>Streptococcaceae</taxon>
        <taxon>Lactococcus</taxon>
    </lineage>
</organism>
<evidence type="ECO:0000255" key="1">
    <source>
        <dbReference type="HAMAP-Rule" id="MF_01331"/>
    </source>
</evidence>
<evidence type="ECO:0000305" key="2"/>
<feature type="chain" id="PRO_0000125166" description="Large ribosomal subunit protein uL22">
    <location>
        <begin position="1"/>
        <end position="115"/>
    </location>
</feature>
<proteinExistence type="inferred from homology"/>